<protein>
    <recommendedName>
        <fullName>Glutinol synthase</fullName>
        <shortName>KdGLS</shortName>
        <ecNumber>5.4.99.49</ecNumber>
    </recommendedName>
</protein>
<sequence>MWKLKIADGGSNPYIFTTNNFVGRQIWEFDPQATDPQQLAKVEAARLDFYHNRYKLKPNSDLLWRMQFLEEKDFRQNIPQVKVEDGEEVSYEAVTAALRRGVHLYSALQASDGHWPAENAGPMFFMPPMVMCLYITGHLNAIFTEEHRSETLRYIYYHQNEDGGWGFHIEGHSTMFGTVLNYICMRLLGEGPEGGQDNAVSRGRKWILDHGGATSIPSWGKTWLSIMGLCDWSGCNPMPPEFWLLPSYLPMHPGKMWCYCRMVYMPMSYLYGKRFTARITPLILQLREEIHIQPYDQIDWKKVRHVCCKEDMYYPHPLLQDLLWDTLYLTTEPLLTRWPLNKLIRQRALQKTMKHIHYEDENSRYITIGTVEKVLCMLACWVEDPNGDYFKKHLARVPDYFWVAEDGMKIQSFGSQHWDTVFSAQALLASDMADEIGTTLAKAHYCIKESQVKDNPSGDFRSMYRHISKGSWTFSDQDHGWQLSDCTAEGLKCCLLFSLMQPEVVGEAMPPERLFDSVNILLYLQSKNGGMPGWEPAGASEWLELLNPTEFFENIVIEHEYVECTSSAVQALVLFKKLHPGHRRKEVERFITNGAKYIEDIQMPDGAWYGNWGVCFTYGAWFALGGLAAAGKTYNNCAAVRKGVDFLLRIQLEDGGWGESYQSCPDKKYVPLEDNRSNLVHTSWALMGLLCSGQADRDPNPLHRAAKLLINSQLEDGDFPQQEITGVFKMNCMLHFAAYRSIFPVWALAEYKRFCNLSSEAISKPSK</sequence>
<feature type="chain" id="PRO_0000418482" description="Glutinol synthase">
    <location>
        <begin position="1"/>
        <end position="767"/>
    </location>
</feature>
<feature type="repeat" description="PFTB 1">
    <location>
        <begin position="148"/>
        <end position="189"/>
    </location>
</feature>
<feature type="repeat" description="PFTB 2">
    <location>
        <begin position="640"/>
        <end position="681"/>
    </location>
</feature>
<feature type="active site" description="Proton donor" evidence="1">
    <location>
        <position position="485"/>
    </location>
</feature>
<evidence type="ECO:0000250" key="1">
    <source>
        <dbReference type="UniProtKB" id="P48449"/>
    </source>
</evidence>
<evidence type="ECO:0000269" key="2">
    <source>
    </source>
</evidence>
<evidence type="ECO:0000305" key="3"/>
<proteinExistence type="evidence at protein level"/>
<organism>
    <name type="scientific">Kalanchoe daigremontiana</name>
    <name type="common">Devil's backbone</name>
    <name type="synonym">Bryophyllum daigremontianum</name>
    <dbReference type="NCBI Taxonomy" id="23013"/>
    <lineage>
        <taxon>Eukaryota</taxon>
        <taxon>Viridiplantae</taxon>
        <taxon>Streptophyta</taxon>
        <taxon>Embryophyta</taxon>
        <taxon>Tracheophyta</taxon>
        <taxon>Spermatophyta</taxon>
        <taxon>Magnoliopsida</taxon>
        <taxon>eudicotyledons</taxon>
        <taxon>Gunneridae</taxon>
        <taxon>Pentapetalae</taxon>
        <taxon>Saxifragales</taxon>
        <taxon>Crassulaceae</taxon>
        <taxon>Kalanchoe</taxon>
    </lineage>
</organism>
<dbReference type="EC" id="5.4.99.49"/>
<dbReference type="EMBL" id="HM623869">
    <property type="protein sequence ID" value="ADK35124.1"/>
    <property type="molecule type" value="mRNA"/>
</dbReference>
<dbReference type="SMR" id="E2IUA7"/>
<dbReference type="KEGG" id="ag:ADK35124"/>
<dbReference type="BioCyc" id="MetaCyc:MONOMER-17973"/>
<dbReference type="BRENDA" id="5.4.99.49">
    <property type="organism ID" value="2798"/>
</dbReference>
<dbReference type="GO" id="GO:0005811">
    <property type="term" value="C:lipid droplet"/>
    <property type="evidence" value="ECO:0007669"/>
    <property type="project" value="InterPro"/>
</dbReference>
<dbReference type="GO" id="GO:0042300">
    <property type="term" value="F:beta-amyrin synthase activity"/>
    <property type="evidence" value="ECO:0007669"/>
    <property type="project" value="TreeGrafter"/>
</dbReference>
<dbReference type="GO" id="GO:0016866">
    <property type="term" value="F:intramolecular transferase activity"/>
    <property type="evidence" value="ECO:0000314"/>
    <property type="project" value="UniProtKB"/>
</dbReference>
<dbReference type="GO" id="GO:0016104">
    <property type="term" value="P:triterpenoid biosynthetic process"/>
    <property type="evidence" value="ECO:0000314"/>
    <property type="project" value="UniProtKB"/>
</dbReference>
<dbReference type="CDD" id="cd02892">
    <property type="entry name" value="SQCY_1"/>
    <property type="match status" value="1"/>
</dbReference>
<dbReference type="FunFam" id="1.50.10.20:FF:000011">
    <property type="entry name" value="Terpene cyclase/mutase family member"/>
    <property type="match status" value="1"/>
</dbReference>
<dbReference type="FunFam" id="1.50.10.20:FF:000064">
    <property type="entry name" value="Uncharacterized protein"/>
    <property type="match status" value="1"/>
</dbReference>
<dbReference type="Gene3D" id="1.50.10.20">
    <property type="match status" value="2"/>
</dbReference>
<dbReference type="InterPro" id="IPR032696">
    <property type="entry name" value="SQ_cyclase_C"/>
</dbReference>
<dbReference type="InterPro" id="IPR032697">
    <property type="entry name" value="SQ_cyclase_N"/>
</dbReference>
<dbReference type="InterPro" id="IPR018333">
    <property type="entry name" value="Squalene_cyclase"/>
</dbReference>
<dbReference type="InterPro" id="IPR008930">
    <property type="entry name" value="Terpenoid_cyclase/PrenylTrfase"/>
</dbReference>
<dbReference type="NCBIfam" id="TIGR01787">
    <property type="entry name" value="squalene_cyclas"/>
    <property type="match status" value="1"/>
</dbReference>
<dbReference type="PANTHER" id="PTHR11764">
    <property type="entry name" value="TERPENE CYCLASE/MUTASE FAMILY MEMBER"/>
    <property type="match status" value="1"/>
</dbReference>
<dbReference type="PANTHER" id="PTHR11764:SF71">
    <property type="entry name" value="TERPENE CYCLASE_MUTASE FAMILY MEMBER"/>
    <property type="match status" value="1"/>
</dbReference>
<dbReference type="Pfam" id="PF13243">
    <property type="entry name" value="SQHop_cyclase_C"/>
    <property type="match status" value="1"/>
</dbReference>
<dbReference type="Pfam" id="PF13249">
    <property type="entry name" value="SQHop_cyclase_N"/>
    <property type="match status" value="1"/>
</dbReference>
<dbReference type="SFLD" id="SFLDG01016">
    <property type="entry name" value="Prenyltransferase_Like_2"/>
    <property type="match status" value="1"/>
</dbReference>
<dbReference type="SUPFAM" id="SSF48239">
    <property type="entry name" value="Terpenoid cyclases/Protein prenyltransferases"/>
    <property type="match status" value="2"/>
</dbReference>
<keyword id="KW-0413">Isomerase</keyword>
<keyword id="KW-0677">Repeat</keyword>
<name>GLUTS_KALDA</name>
<reference key="1">
    <citation type="journal article" date="2010" name="J. Biol. Chem.">
        <title>Cloning and characterization of oxidosqualene cyclases from Kalanchoe daigremontiana: enzymes catalyzing up to 10 rearrangement steps yielding friedelin and other triterpenoids.</title>
        <authorList>
            <person name="Wang Z."/>
            <person name="Yeats T."/>
            <person name="Han H."/>
            <person name="Jetter R."/>
        </authorList>
    </citation>
    <scope>NUCLEOTIDE SEQUENCE [MRNA]</scope>
    <scope>FUNCTION</scope>
    <scope>CATALYTIC ACTIVITY</scope>
    <scope>TISSUE SPECIFICITY</scope>
</reference>
<comment type="function">
    <text evidence="2">Oxidosqualene cyclase that generates glutinol, a triterpenoid product. Glutinol is probably required to coat the leaf exterior as a defense compound against pathogens or herbivores.</text>
</comment>
<comment type="catalytic activity">
    <reaction evidence="2">
        <text>(S)-2,3-epoxysqualene = glutinol</text>
        <dbReference type="Rhea" id="RHEA:31859"/>
        <dbReference type="ChEBI" id="CHEBI:15441"/>
        <dbReference type="ChEBI" id="CHEBI:63462"/>
        <dbReference type="EC" id="5.4.99.49"/>
    </reaction>
</comment>
<comment type="tissue specificity">
    <text evidence="2">Expressed only in the epidermal cells on both sides of the leaf and not in internal leaf tissues.</text>
</comment>
<comment type="similarity">
    <text evidence="3">Belongs to the terpene cyclase/mutase family.</text>
</comment>
<accession>E2IUA7</accession>